<comment type="function">
    <text evidence="1">Catalyzes the reversible phosphatidyl group transfer from one phosphatidylglycerol molecule to another to form cardiolipin (CL) (diphosphatidylglycerol) and glycerol.</text>
</comment>
<comment type="catalytic activity">
    <reaction evidence="1">
        <text>2 a 1,2-diacyl-sn-glycero-3-phospho-(1'-sn-glycerol) = a cardiolipin + glycerol</text>
        <dbReference type="Rhea" id="RHEA:31451"/>
        <dbReference type="ChEBI" id="CHEBI:17754"/>
        <dbReference type="ChEBI" id="CHEBI:62237"/>
        <dbReference type="ChEBI" id="CHEBI:64716"/>
    </reaction>
</comment>
<comment type="subcellular location">
    <subcellularLocation>
        <location evidence="1">Cell membrane</location>
        <topology evidence="1">Multi-pass membrane protein</topology>
    </subcellularLocation>
</comment>
<comment type="similarity">
    <text evidence="1">Belongs to the phospholipase D family. Cardiolipin synthase subfamily. ClsA sub-subfamily.</text>
</comment>
<keyword id="KW-1003">Cell membrane</keyword>
<keyword id="KW-0444">Lipid biosynthesis</keyword>
<keyword id="KW-0443">Lipid metabolism</keyword>
<keyword id="KW-0472">Membrane</keyword>
<keyword id="KW-0594">Phospholipid biosynthesis</keyword>
<keyword id="KW-1208">Phospholipid metabolism</keyword>
<keyword id="KW-1185">Reference proteome</keyword>
<keyword id="KW-0677">Repeat</keyword>
<keyword id="KW-0808">Transferase</keyword>
<keyword id="KW-0812">Transmembrane</keyword>
<keyword id="KW-1133">Transmembrane helix</keyword>
<feature type="chain" id="PRO_0000201279" description="Cardiolipin synthase A">
    <location>
        <begin position="1"/>
        <end position="495"/>
    </location>
</feature>
<feature type="transmembrane region" description="Helical" evidence="1">
    <location>
        <begin position="9"/>
        <end position="29"/>
    </location>
</feature>
<feature type="transmembrane region" description="Helical" evidence="1">
    <location>
        <begin position="46"/>
        <end position="66"/>
    </location>
</feature>
<feature type="domain" description="PLD phosphodiesterase 1" evidence="1">
    <location>
        <begin position="227"/>
        <end position="254"/>
    </location>
</feature>
<feature type="domain" description="PLD phosphodiesterase 2" evidence="1">
    <location>
        <begin position="408"/>
        <end position="435"/>
    </location>
</feature>
<feature type="active site" evidence="1">
    <location>
        <position position="232"/>
    </location>
</feature>
<feature type="active site" evidence="1">
    <location>
        <position position="234"/>
    </location>
</feature>
<feature type="active site" evidence="1">
    <location>
        <position position="239"/>
    </location>
</feature>
<feature type="active site" evidence="1">
    <location>
        <position position="413"/>
    </location>
</feature>
<feature type="active site" evidence="1">
    <location>
        <position position="415"/>
    </location>
</feature>
<feature type="active site" evidence="1">
    <location>
        <position position="420"/>
    </location>
</feature>
<reference key="1">
    <citation type="journal article" date="2002" name="Nat. Genet.">
        <title>Genome sequence of the endocellular obligate symbiont of tsetse flies, Wigglesworthia glossinidia.</title>
        <authorList>
            <person name="Akman L."/>
            <person name="Yamashita A."/>
            <person name="Watanabe H."/>
            <person name="Oshima K."/>
            <person name="Shiba T."/>
            <person name="Hattori M."/>
            <person name="Aksoy S."/>
        </authorList>
    </citation>
    <scope>NUCLEOTIDE SEQUENCE [LARGE SCALE GENOMIC DNA]</scope>
</reference>
<evidence type="ECO:0000255" key="1">
    <source>
        <dbReference type="HAMAP-Rule" id="MF_00190"/>
    </source>
</evidence>
<sequence length="495" mass="57526">MLINFFSSIEVLFVIIKWILLLGYWWLITEVTIRILFKRRTVPSAMAWLLIIYVVPFIGAIIYLLLGELNLEKKRIKRSKIIWISALKKIKKLKNYKEIFTTKNSHIARSLFRLCKHRQGIGGVKSEKINILNDPDNVMQSVINDINLAKISIEMIFYIWHPGGWTNYVVEVLIKAANRGVKCRLILDSAGSKNFLKSIQVKIMRKSGIKIVEALNLNILQIFLRRMDLRQHRKMILIDNYIGYTGSMNMIDPKFFKKNRKIGEWIDIMIRMEGPVASAMRIIFSCDWEIETGENIFYAPYDTKKCNIIKKDNNYKTQVIPSGPGVSEGVIHQVLLTAIYSAKKILIMTTPYLVPSDDILHAICTASQRGVSVYIIIPKFIDSILVKWASRSFFSELLHAGVLIYQFEGGLLHTKSILVDDQLSLVGTVNLDMRSLWLNFEITLMVDNRNFGKKLKKIQTNYMSLSKVLHLKEWSKRPYWKRIIERFFYFFSPLL</sequence>
<proteinExistence type="inferred from homology"/>
<accession>Q8D2I8</accession>
<dbReference type="EC" id="2.7.8.-" evidence="1"/>
<dbReference type="EMBL" id="BA000021">
    <property type="protein sequence ID" value="BAC24512.1"/>
    <property type="molecule type" value="Genomic_DNA"/>
</dbReference>
<dbReference type="SMR" id="Q8D2I8"/>
<dbReference type="STRING" id="36870.gene:10368866"/>
<dbReference type="KEGG" id="wbr:cls"/>
<dbReference type="eggNOG" id="COG1502">
    <property type="taxonomic scope" value="Bacteria"/>
</dbReference>
<dbReference type="HOGENOM" id="CLU_038053_1_0_6"/>
<dbReference type="OrthoDB" id="9814092at2"/>
<dbReference type="Proteomes" id="UP000000562">
    <property type="component" value="Chromosome"/>
</dbReference>
<dbReference type="GO" id="GO:0005886">
    <property type="term" value="C:plasma membrane"/>
    <property type="evidence" value="ECO:0007669"/>
    <property type="project" value="UniProtKB-SubCell"/>
</dbReference>
<dbReference type="GO" id="GO:0008808">
    <property type="term" value="F:cardiolipin synthase activity"/>
    <property type="evidence" value="ECO:0007669"/>
    <property type="project" value="InterPro"/>
</dbReference>
<dbReference type="GO" id="GO:0032049">
    <property type="term" value="P:cardiolipin biosynthetic process"/>
    <property type="evidence" value="ECO:0007669"/>
    <property type="project" value="InterPro"/>
</dbReference>
<dbReference type="CDD" id="cd09152">
    <property type="entry name" value="PLDc_EcCLS_like_1"/>
    <property type="match status" value="1"/>
</dbReference>
<dbReference type="CDD" id="cd09158">
    <property type="entry name" value="PLDc_EcCLS_like_2"/>
    <property type="match status" value="1"/>
</dbReference>
<dbReference type="Gene3D" id="3.30.870.10">
    <property type="entry name" value="Endonuclease Chain A"/>
    <property type="match status" value="2"/>
</dbReference>
<dbReference type="HAMAP" id="MF_00190">
    <property type="entry name" value="Cardiolipin_synth_ClsA"/>
    <property type="match status" value="1"/>
</dbReference>
<dbReference type="InterPro" id="IPR022924">
    <property type="entry name" value="Cardiolipin_synthase"/>
</dbReference>
<dbReference type="InterPro" id="IPR030840">
    <property type="entry name" value="CL_synthase_A"/>
</dbReference>
<dbReference type="InterPro" id="IPR027379">
    <property type="entry name" value="CLS_N"/>
</dbReference>
<dbReference type="InterPro" id="IPR025202">
    <property type="entry name" value="PLD-like_dom"/>
</dbReference>
<dbReference type="InterPro" id="IPR001736">
    <property type="entry name" value="PLipase_D/transphosphatidylase"/>
</dbReference>
<dbReference type="NCBIfam" id="TIGR04265">
    <property type="entry name" value="bac_cardiolipin"/>
    <property type="match status" value="1"/>
</dbReference>
<dbReference type="PANTHER" id="PTHR21248">
    <property type="entry name" value="CARDIOLIPIN SYNTHASE"/>
    <property type="match status" value="1"/>
</dbReference>
<dbReference type="PANTHER" id="PTHR21248:SF22">
    <property type="entry name" value="PHOSPHOLIPASE D"/>
    <property type="match status" value="1"/>
</dbReference>
<dbReference type="Pfam" id="PF13091">
    <property type="entry name" value="PLDc_2"/>
    <property type="match status" value="2"/>
</dbReference>
<dbReference type="Pfam" id="PF13396">
    <property type="entry name" value="PLDc_N"/>
    <property type="match status" value="1"/>
</dbReference>
<dbReference type="SMART" id="SM00155">
    <property type="entry name" value="PLDc"/>
    <property type="match status" value="2"/>
</dbReference>
<dbReference type="SUPFAM" id="SSF56024">
    <property type="entry name" value="Phospholipase D/nuclease"/>
    <property type="match status" value="2"/>
</dbReference>
<dbReference type="PROSITE" id="PS50035">
    <property type="entry name" value="PLD"/>
    <property type="match status" value="2"/>
</dbReference>
<gene>
    <name evidence="1" type="primary">clsA</name>
    <name type="synonym">cls</name>
    <name type="ordered locus">WIGBR3660</name>
</gene>
<protein>
    <recommendedName>
        <fullName evidence="1">Cardiolipin synthase A</fullName>
        <shortName evidence="1">CL synthase</shortName>
        <ecNumber evidence="1">2.7.8.-</ecNumber>
    </recommendedName>
</protein>
<name>CLSA_WIGBR</name>
<organism>
    <name type="scientific">Wigglesworthia glossinidia brevipalpis</name>
    <dbReference type="NCBI Taxonomy" id="36870"/>
    <lineage>
        <taxon>Bacteria</taxon>
        <taxon>Pseudomonadati</taxon>
        <taxon>Pseudomonadota</taxon>
        <taxon>Gammaproteobacteria</taxon>
        <taxon>Enterobacterales</taxon>
        <taxon>Erwiniaceae</taxon>
        <taxon>Wigglesworthia</taxon>
    </lineage>
</organism>